<organism>
    <name type="scientific">Saccharomyces cerevisiae (strain ATCC 204508 / S288c)</name>
    <name type="common">Baker's yeast</name>
    <dbReference type="NCBI Taxonomy" id="559292"/>
    <lineage>
        <taxon>Eukaryota</taxon>
        <taxon>Fungi</taxon>
        <taxon>Dikarya</taxon>
        <taxon>Ascomycota</taxon>
        <taxon>Saccharomycotina</taxon>
        <taxon>Saccharomycetes</taxon>
        <taxon>Saccharomycetales</taxon>
        <taxon>Saccharomycetaceae</taxon>
        <taxon>Saccharomyces</taxon>
    </lineage>
</organism>
<reference key="1">
    <citation type="journal article" date="1997" name="Nature">
        <title>The nucleotide sequence of Saccharomyces cerevisiae chromosome IV.</title>
        <authorList>
            <person name="Jacq C."/>
            <person name="Alt-Moerbe J."/>
            <person name="Andre B."/>
            <person name="Arnold W."/>
            <person name="Bahr A."/>
            <person name="Ballesta J.P.G."/>
            <person name="Bargues M."/>
            <person name="Baron L."/>
            <person name="Becker A."/>
            <person name="Biteau N."/>
            <person name="Bloecker H."/>
            <person name="Blugeon C."/>
            <person name="Boskovic J."/>
            <person name="Brandt P."/>
            <person name="Brueckner M."/>
            <person name="Buitrago M.J."/>
            <person name="Coster F."/>
            <person name="Delaveau T."/>
            <person name="del Rey F."/>
            <person name="Dujon B."/>
            <person name="Eide L.G."/>
            <person name="Garcia-Cantalejo J.M."/>
            <person name="Goffeau A."/>
            <person name="Gomez-Peris A."/>
            <person name="Granotier C."/>
            <person name="Hanemann V."/>
            <person name="Hankeln T."/>
            <person name="Hoheisel J.D."/>
            <person name="Jaeger W."/>
            <person name="Jimenez A."/>
            <person name="Jonniaux J.-L."/>
            <person name="Kraemer C."/>
            <person name="Kuester H."/>
            <person name="Laamanen P."/>
            <person name="Legros Y."/>
            <person name="Louis E.J."/>
            <person name="Moeller-Rieker S."/>
            <person name="Monnet A."/>
            <person name="Moro M."/>
            <person name="Mueller-Auer S."/>
            <person name="Nussbaumer B."/>
            <person name="Paricio N."/>
            <person name="Paulin L."/>
            <person name="Perea J."/>
            <person name="Perez-Alonso M."/>
            <person name="Perez-Ortin J.E."/>
            <person name="Pohl T.M."/>
            <person name="Prydz H."/>
            <person name="Purnelle B."/>
            <person name="Rasmussen S.W."/>
            <person name="Remacha M.A."/>
            <person name="Revuelta J.L."/>
            <person name="Rieger M."/>
            <person name="Salom D."/>
            <person name="Saluz H.P."/>
            <person name="Saiz J.E."/>
            <person name="Saren A.-M."/>
            <person name="Schaefer M."/>
            <person name="Scharfe M."/>
            <person name="Schmidt E.R."/>
            <person name="Schneider C."/>
            <person name="Scholler P."/>
            <person name="Schwarz S."/>
            <person name="Soler-Mira A."/>
            <person name="Urrestarazu L.A."/>
            <person name="Verhasselt P."/>
            <person name="Vissers S."/>
            <person name="Voet M."/>
            <person name="Volckaert G."/>
            <person name="Wagner G."/>
            <person name="Wambutt R."/>
            <person name="Wedler E."/>
            <person name="Wedler H."/>
            <person name="Woelfl S."/>
            <person name="Harris D.E."/>
            <person name="Bowman S."/>
            <person name="Brown D."/>
            <person name="Churcher C.M."/>
            <person name="Connor R."/>
            <person name="Dedman K."/>
            <person name="Gentles S."/>
            <person name="Hamlin N."/>
            <person name="Hunt S."/>
            <person name="Jones L."/>
            <person name="McDonald S."/>
            <person name="Murphy L.D."/>
            <person name="Niblett D."/>
            <person name="Odell C."/>
            <person name="Oliver K."/>
            <person name="Rajandream M.A."/>
            <person name="Richards C."/>
            <person name="Shore L."/>
            <person name="Walsh S.V."/>
            <person name="Barrell B.G."/>
            <person name="Dietrich F.S."/>
            <person name="Mulligan J.T."/>
            <person name="Allen E."/>
            <person name="Araujo R."/>
            <person name="Aviles E."/>
            <person name="Berno A."/>
            <person name="Carpenter J."/>
            <person name="Chen E."/>
            <person name="Cherry J.M."/>
            <person name="Chung E."/>
            <person name="Duncan M."/>
            <person name="Hunicke-Smith S."/>
            <person name="Hyman R.W."/>
            <person name="Komp C."/>
            <person name="Lashkari D."/>
            <person name="Lew H."/>
            <person name="Lin D."/>
            <person name="Mosedale D."/>
            <person name="Nakahara K."/>
            <person name="Namath A."/>
            <person name="Oefner P."/>
            <person name="Oh C."/>
            <person name="Petel F.X."/>
            <person name="Roberts D."/>
            <person name="Schramm S."/>
            <person name="Schroeder M."/>
            <person name="Shogren T."/>
            <person name="Shroff N."/>
            <person name="Winant A."/>
            <person name="Yelton M.A."/>
            <person name="Botstein D."/>
            <person name="Davis R.W."/>
            <person name="Johnston M."/>
            <person name="Andrews S."/>
            <person name="Brinkman R."/>
            <person name="Cooper J."/>
            <person name="Ding H."/>
            <person name="Du Z."/>
            <person name="Favello A."/>
            <person name="Fulton L."/>
            <person name="Gattung S."/>
            <person name="Greco T."/>
            <person name="Hallsworth K."/>
            <person name="Hawkins J."/>
            <person name="Hillier L.W."/>
            <person name="Jier M."/>
            <person name="Johnson D."/>
            <person name="Johnston L."/>
            <person name="Kirsten J."/>
            <person name="Kucaba T."/>
            <person name="Langston Y."/>
            <person name="Latreille P."/>
            <person name="Le T."/>
            <person name="Mardis E."/>
            <person name="Menezes S."/>
            <person name="Miller N."/>
            <person name="Nhan M."/>
            <person name="Pauley A."/>
            <person name="Peluso D."/>
            <person name="Rifkin L."/>
            <person name="Riles L."/>
            <person name="Taich A."/>
            <person name="Trevaskis E."/>
            <person name="Vignati D."/>
            <person name="Wilcox L."/>
            <person name="Wohldman P."/>
            <person name="Vaudin M."/>
            <person name="Wilson R."/>
            <person name="Waterston R."/>
            <person name="Albermann K."/>
            <person name="Hani J."/>
            <person name="Heumann K."/>
            <person name="Kleine K."/>
            <person name="Mewes H.-W."/>
            <person name="Zollner A."/>
            <person name="Zaccaria P."/>
        </authorList>
    </citation>
    <scope>NUCLEOTIDE SEQUENCE [LARGE SCALE GENOMIC DNA]</scope>
    <source>
        <strain>ATCC 204508 / S288c</strain>
    </source>
</reference>
<reference key="2">
    <citation type="journal article" date="2014" name="G3 (Bethesda)">
        <title>The reference genome sequence of Saccharomyces cerevisiae: Then and now.</title>
        <authorList>
            <person name="Engel S.R."/>
            <person name="Dietrich F.S."/>
            <person name="Fisk D.G."/>
            <person name="Binkley G."/>
            <person name="Balakrishnan R."/>
            <person name="Costanzo M.C."/>
            <person name="Dwight S.S."/>
            <person name="Hitz B.C."/>
            <person name="Karra K."/>
            <person name="Nash R.S."/>
            <person name="Weng S."/>
            <person name="Wong E.D."/>
            <person name="Lloyd P."/>
            <person name="Skrzypek M.S."/>
            <person name="Miyasato S.R."/>
            <person name="Simison M."/>
            <person name="Cherry J.M."/>
        </authorList>
    </citation>
    <scope>GENOME REANNOTATION</scope>
    <source>
        <strain>ATCC 204508 / S288c</strain>
    </source>
</reference>
<reference key="3">
    <citation type="journal article" date="2001" name="EMBO J.">
        <title>The Saccharomyces cerevisiae Set1 complex includes an Ash2 homologue and methylates histone 3 lysine 4.</title>
        <authorList>
            <person name="Roguev A."/>
            <person name="Schaft D."/>
            <person name="Shevchenko A."/>
            <person name="Pijnappel W.W.M.P."/>
            <person name="Wilm M."/>
            <person name="Aasland R."/>
            <person name="Stewart A.F."/>
        </authorList>
    </citation>
    <scope>FUNCTION</scope>
    <scope>SUBUNIT</scope>
</reference>
<reference key="4">
    <citation type="journal article" date="2002" name="J. Biol. Chem.">
        <title>COMPASS, a histone H3 (Lysine 4) methyltransferase required for telomeric silencing of gene expression.</title>
        <authorList>
            <person name="Krogan N.J."/>
            <person name="Dover J."/>
            <person name="Khorrami S."/>
            <person name="Greenblatt J.F."/>
            <person name="Schneider J."/>
            <person name="Johnston M."/>
            <person name="Shilatifard A."/>
        </authorList>
    </citation>
    <scope>FUNCTION</scope>
</reference>
<reference key="5">
    <citation type="journal article" date="2002" name="Proc. Natl. Acad. Sci. U.S.A.">
        <title>A trithorax-group complex purified from Saccharomyces cerevisiae is required for methylation of histone H3.</title>
        <authorList>
            <person name="Nagy P.L."/>
            <person name="Griesenbeck J."/>
            <person name="Kornberg R.D."/>
            <person name="Cleary M.L."/>
        </authorList>
    </citation>
    <scope>FUNCTION</scope>
</reference>
<reference key="6">
    <citation type="journal article" date="2001" name="Proc. Natl. Acad. Sci. U.S.A.">
        <title>COMPASS: a complex of proteins associated with a trithorax-related SET domain protein.</title>
        <authorList>
            <person name="Miller T."/>
            <person name="Krogan N.J."/>
            <person name="Dover J."/>
            <person name="Erdjument-Bromage H."/>
            <person name="Tempst P."/>
            <person name="Johnston M."/>
            <person name="Greenblatt J.F."/>
            <person name="Shilatifard A."/>
        </authorList>
    </citation>
    <scope>SUBUNIT</scope>
</reference>
<reference key="7">
    <citation type="journal article" date="2003" name="Nature">
        <title>Global analysis of protein localization in budding yeast.</title>
        <authorList>
            <person name="Huh W.-K."/>
            <person name="Falvo J.V."/>
            <person name="Gerke L.C."/>
            <person name="Carroll A.S."/>
            <person name="Howson R.W."/>
            <person name="Weissman J.S."/>
            <person name="O'Shea E.K."/>
        </authorList>
    </citation>
    <scope>SUBCELLULAR LOCATION [LARGE SCALE ANALYSIS]</scope>
</reference>
<reference key="8">
    <citation type="journal article" date="2003" name="Nature">
        <title>Global analysis of protein expression in yeast.</title>
        <authorList>
            <person name="Ghaemmaghami S."/>
            <person name="Huh W.-K."/>
            <person name="Bower K."/>
            <person name="Howson R.W."/>
            <person name="Belle A."/>
            <person name="Dephoure N."/>
            <person name="O'Shea E.K."/>
            <person name="Weissman J.S."/>
        </authorList>
    </citation>
    <scope>LEVEL OF PROTEIN EXPRESSION [LARGE SCALE ANALYSIS]</scope>
</reference>
<reference key="9">
    <citation type="journal article" date="2015" name="Protein Cell">
        <title>Structural implications of Dpy30 oligomerization for MLL/SET1 COMPASS H3K4 trimethylation.</title>
        <authorList>
            <person name="Zhang H."/>
            <person name="Li M."/>
            <person name="Gao Y."/>
            <person name="Jia C."/>
            <person name="Pan X."/>
            <person name="Cao P."/>
            <person name="Zhao X."/>
            <person name="Zhang J."/>
            <person name="Chang W."/>
        </authorList>
    </citation>
    <scope>INTERACTION WITH BRE2</scope>
</reference>
<reference key="10">
    <citation type="journal article" date="2017" name="Cell Discov.">
        <title>Binding to RNA regulates Set1 function.</title>
        <authorList>
            <person name="Luciano P."/>
            <person name="Jeon J."/>
            <person name="El-Kaoutari A."/>
            <person name="Challal D."/>
            <person name="Bonnet A."/>
            <person name="Barucco M."/>
            <person name="Candelli T."/>
            <person name="Jourquin F."/>
            <person name="Lesage P."/>
            <person name="Kim J."/>
            <person name="Libri D."/>
            <person name="Geli V."/>
        </authorList>
    </citation>
    <scope>IDENTIFICATION IN THE SET1C/COMPASS COMPLEX</scope>
</reference>
<reference evidence="15" key="11">
    <citation type="journal article" date="2018" name="Cell">
        <title>Structure and conformational dynamics of a COMPASS histone H3K4 methyltransferase complex.</title>
        <authorList>
            <person name="Qu Q."/>
            <person name="Takahashi Y.H."/>
            <person name="Yang Y."/>
            <person name="Hu H."/>
            <person name="Zhang Y."/>
            <person name="Brunzelle J.S."/>
            <person name="Couture J.F."/>
            <person name="Shilatifard A."/>
            <person name="Skiniotis G."/>
        </authorList>
    </citation>
    <scope>STRUCTURE BY ELECTRON MICROSCOPY (4.30 ANGSTROMS) OF 122-163 WITHIN THE CORE COMPASS COMPLEX</scope>
    <scope>SUBUNIT</scope>
</reference>
<reference evidence="16" key="12">
    <citation type="journal article" date="2020" name="Elife">
        <title>Structural basis for COMPASS recognition of an H2B-ubiquitinated nucleosome.</title>
        <authorList>
            <person name="Worden E.J."/>
            <person name="Zhang X."/>
            <person name="Wolberger C."/>
        </authorList>
    </citation>
    <scope>STRUCTURE BY ELECTRON MICROSCOPY (3.37 ANGSTROMS) WITHIN THE CORE COMPASS H2B-UBIQUITIN NUCLEOSOME COMPLEX</scope>
    <scope>SUBUNIT</scope>
    <scope>FUNCTION</scope>
</reference>
<gene>
    <name evidence="12" type="primary">SDC1</name>
    <name evidence="11" type="synonym">CPS25</name>
    <name evidence="13" type="synonym">SAF19</name>
    <name type="ordered locus">YDR469W</name>
</gene>
<dbReference type="EMBL" id="U33050">
    <property type="protein sequence ID" value="AAB64903.1"/>
    <property type="molecule type" value="Genomic_DNA"/>
</dbReference>
<dbReference type="EMBL" id="BK006938">
    <property type="protein sequence ID" value="DAA12303.1"/>
    <property type="molecule type" value="Genomic_DNA"/>
</dbReference>
<dbReference type="PIR" id="S69636">
    <property type="entry name" value="S69636"/>
</dbReference>
<dbReference type="RefSeq" id="NP_010757.3">
    <property type="nucleotide sequence ID" value="NM_001180777.3"/>
</dbReference>
<dbReference type="PDB" id="6BX3">
    <property type="method" value="EM"/>
    <property type="resolution" value="4.30 A"/>
    <property type="chains" value="M/N=122-163"/>
</dbReference>
<dbReference type="PDB" id="6VEN">
    <property type="method" value="EM"/>
    <property type="resolution" value="3.37 A"/>
    <property type="chains" value="P/Q=1-175"/>
</dbReference>
<dbReference type="PDBsum" id="6BX3"/>
<dbReference type="PDBsum" id="6VEN"/>
<dbReference type="EMDB" id="EMD-21157"/>
<dbReference type="EMDB" id="EMD-7303"/>
<dbReference type="SMR" id="Q03323"/>
<dbReference type="BioGRID" id="32522">
    <property type="interactions" value="504"/>
</dbReference>
<dbReference type="ComplexPortal" id="CPX-1039">
    <property type="entry name" value="COMPASS complex"/>
</dbReference>
<dbReference type="DIP" id="DIP-1738N"/>
<dbReference type="FunCoup" id="Q03323">
    <property type="interactions" value="170"/>
</dbReference>
<dbReference type="IntAct" id="Q03323">
    <property type="interactions" value="16"/>
</dbReference>
<dbReference type="MINT" id="Q03323"/>
<dbReference type="STRING" id="4932.YDR469W"/>
<dbReference type="iPTMnet" id="Q03323"/>
<dbReference type="PaxDb" id="4932-YDR469W"/>
<dbReference type="PeptideAtlas" id="Q03323"/>
<dbReference type="EnsemblFungi" id="YDR469W_mRNA">
    <property type="protein sequence ID" value="YDR469W"/>
    <property type="gene ID" value="YDR469W"/>
</dbReference>
<dbReference type="GeneID" id="852080"/>
<dbReference type="KEGG" id="sce:YDR469W"/>
<dbReference type="AGR" id="SGD:S000002877"/>
<dbReference type="SGD" id="S000002877">
    <property type="gene designation" value="SDC1"/>
</dbReference>
<dbReference type="VEuPathDB" id="FungiDB:YDR469W"/>
<dbReference type="eggNOG" id="KOG4109">
    <property type="taxonomic scope" value="Eukaryota"/>
</dbReference>
<dbReference type="HOGENOM" id="CLU_1526376_0_0_1"/>
<dbReference type="InParanoid" id="Q03323"/>
<dbReference type="OMA" id="PSSXNER"/>
<dbReference type="OrthoDB" id="417678at2759"/>
<dbReference type="BioCyc" id="YEAST:G3O-29996-MONOMER"/>
<dbReference type="BioGRID-ORCS" id="852080">
    <property type="hits" value="0 hits in 10 CRISPR screens"/>
</dbReference>
<dbReference type="PRO" id="PR:Q03323"/>
<dbReference type="Proteomes" id="UP000002311">
    <property type="component" value="Chromosome IV"/>
</dbReference>
<dbReference type="RNAct" id="Q03323">
    <property type="molecule type" value="protein"/>
</dbReference>
<dbReference type="GO" id="GO:0000781">
    <property type="term" value="C:chromosome, telomeric region"/>
    <property type="evidence" value="ECO:0007669"/>
    <property type="project" value="GOC"/>
</dbReference>
<dbReference type="GO" id="GO:0005634">
    <property type="term" value="C:nucleus"/>
    <property type="evidence" value="ECO:0000303"/>
    <property type="project" value="ComplexPortal"/>
</dbReference>
<dbReference type="GO" id="GO:0048188">
    <property type="term" value="C:Set1C/COMPASS complex"/>
    <property type="evidence" value="ECO:0000314"/>
    <property type="project" value="UniProtKB"/>
</dbReference>
<dbReference type="GO" id="GO:0031509">
    <property type="term" value="P:subtelomeric heterochromatin formation"/>
    <property type="evidence" value="ECO:0000315"/>
    <property type="project" value="SGD"/>
</dbReference>
<dbReference type="CDD" id="cd22965">
    <property type="entry name" value="DD_DPY30_SDC1"/>
    <property type="match status" value="1"/>
</dbReference>
<dbReference type="Gene3D" id="1.20.890.10">
    <property type="entry name" value="cAMP-dependent protein kinase regulatory subunit, dimerization-anchoring domain"/>
    <property type="match status" value="1"/>
</dbReference>
<dbReference type="InterPro" id="IPR007858">
    <property type="entry name" value="Dpy-30_motif"/>
</dbReference>
<dbReference type="InterPro" id="IPR049629">
    <property type="entry name" value="DPY30_SDC1_DD"/>
</dbReference>
<dbReference type="Pfam" id="PF05186">
    <property type="entry name" value="Dpy-30"/>
    <property type="match status" value="1"/>
</dbReference>
<proteinExistence type="evidence at protein level"/>
<accession>Q03323</accession>
<accession>D6VT93</accession>
<feature type="chain" id="PRO_0000114686" description="COMPASS component SDC1">
    <location>
        <begin position="1"/>
        <end position="175"/>
    </location>
</feature>
<feature type="region of interest" description="Disordered" evidence="1">
    <location>
        <begin position="1"/>
        <end position="45"/>
    </location>
</feature>
<feature type="region of interest" description="DPY-30">
    <location>
        <begin position="121"/>
        <end position="162"/>
    </location>
</feature>
<feature type="compositionally biased region" description="Polar residues" evidence="1">
    <location>
        <begin position="1"/>
        <end position="12"/>
    </location>
</feature>
<feature type="compositionally biased region" description="Basic and acidic residues" evidence="1">
    <location>
        <begin position="32"/>
        <end position="45"/>
    </location>
</feature>
<feature type="helix" evidence="17">
    <location>
        <begin position="121"/>
        <end position="128"/>
    </location>
</feature>
<feature type="helix" evidence="17">
    <location>
        <begin position="131"/>
        <end position="143"/>
    </location>
</feature>
<feature type="helix" evidence="17">
    <location>
        <begin position="149"/>
        <end position="160"/>
    </location>
</feature>
<sequence length="175" mass="19446">MNESENSPQHNEVTVPMVEDTSSNADIPMEQIQREDNKNYDKHDNECFDMNGNHNNNSDNLQFDSVPSSATKDLKNIKSVTNQNVKIEESSSTNSVIEESSEPKISKLENVNLAATVGGSQTRKYLNTNVTPHLLAGMRLIAVQQPEDPLRVLGEYLIEQSNILKSGEKESNASK</sequence>
<keyword id="KW-0002">3D-structure</keyword>
<keyword id="KW-0539">Nucleus</keyword>
<keyword id="KW-1185">Reference proteome</keyword>
<protein>
    <recommendedName>
        <fullName evidence="12">COMPASS component SDC1</fullName>
    </recommendedName>
    <alternativeName>
        <fullName evidence="12">Complex proteins associated with SET1 protein SDC1</fullName>
    </alternativeName>
    <alternativeName>
        <fullName evidence="12">Set1C component SDC1</fullName>
    </alternativeName>
    <alternativeName>
        <fullName>Suppressor of CDC25 protein 1</fullName>
    </alternativeName>
</protein>
<name>SDC1_YEAST</name>
<comment type="function">
    <text evidence="3 4 10">Component of the Set1C/COMPASS complex that specifically mono-, di- and trimethylates histone H3 to form H3K4me1/2/3, which subsequently plays a role in telomere length maintenance and transcription elongation regulation (PubMed:11742990, PubMed:11805083). COMPASS recognizes ubiquitinated H2B on one face of the nucleosome which stimulates the methylation of H3 on the opposing face (PubMed:31922488).</text>
</comment>
<comment type="subunit">
    <text evidence="2 3 7 8 9 10">Component of the Set1C/COMPASS complex which consists of SET1(2), BRE2(2), SPP1(2), SDC1(1), SHG1(1), SWD1(1), SWD2(1), and SWD3(1) (PubMed:11687631, PubMed:11742990, PubMed:29071121, PubMed:30100186, PubMed:31922488). Interacts directly with BRE2 (PubMed:25542209).</text>
</comment>
<comment type="interaction">
    <interactant intactId="EBI-38307">
        <id>Q03323</id>
    </interactant>
    <interactant intactId="EBI-27115">
        <id>P43132</id>
        <label>BRE2</label>
    </interactant>
    <organismsDiffer>false</organismsDiffer>
    <experiments>8</experiments>
</comment>
<comment type="subcellular location">
    <subcellularLocation>
        <location evidence="5">Nucleus</location>
    </subcellularLocation>
</comment>
<comment type="miscellaneous">
    <text evidence="6">Present with 937 molecules/cell in log phase SD medium.</text>
</comment>
<comment type="similarity">
    <text evidence="14">Belongs to the dpy-30 family.</text>
</comment>
<evidence type="ECO:0000256" key="1">
    <source>
        <dbReference type="SAM" id="MobiDB-lite"/>
    </source>
</evidence>
<evidence type="ECO:0000269" key="2">
    <source>
    </source>
</evidence>
<evidence type="ECO:0000269" key="3">
    <source>
    </source>
</evidence>
<evidence type="ECO:0000269" key="4">
    <source>
    </source>
</evidence>
<evidence type="ECO:0000269" key="5">
    <source>
    </source>
</evidence>
<evidence type="ECO:0000269" key="6">
    <source>
    </source>
</evidence>
<evidence type="ECO:0000269" key="7">
    <source>
    </source>
</evidence>
<evidence type="ECO:0000269" key="8">
    <source>
    </source>
</evidence>
<evidence type="ECO:0000269" key="9">
    <source>
    </source>
</evidence>
<evidence type="ECO:0000269" key="10">
    <source>
    </source>
</evidence>
<evidence type="ECO:0000303" key="11">
    <source>
    </source>
</evidence>
<evidence type="ECO:0000303" key="12">
    <source>
    </source>
</evidence>
<evidence type="ECO:0000303" key="13">
    <source>
    </source>
</evidence>
<evidence type="ECO:0000305" key="14"/>
<evidence type="ECO:0007744" key="15">
    <source>
        <dbReference type="PDB" id="6BX3"/>
    </source>
</evidence>
<evidence type="ECO:0007744" key="16">
    <source>
        <dbReference type="PDB" id="6VEN"/>
    </source>
</evidence>
<evidence type="ECO:0007829" key="17">
    <source>
        <dbReference type="PDB" id="6VEN"/>
    </source>
</evidence>